<dbReference type="EMBL" id="CP000942">
    <property type="protein sequence ID" value="ACA33290.1"/>
    <property type="molecule type" value="Genomic_DNA"/>
</dbReference>
<dbReference type="RefSeq" id="WP_004025915.1">
    <property type="nucleotide sequence ID" value="NC_010503.1"/>
</dbReference>
<dbReference type="SMR" id="B1AIM4"/>
<dbReference type="GeneID" id="93848710"/>
<dbReference type="KEGG" id="upa:UPA3_0243"/>
<dbReference type="HOGENOM" id="CLU_144911_0_1_14"/>
<dbReference type="Proteomes" id="UP000002162">
    <property type="component" value="Chromosome"/>
</dbReference>
<dbReference type="GO" id="GO:0005737">
    <property type="term" value="C:cytoplasm"/>
    <property type="evidence" value="ECO:0007669"/>
    <property type="project" value="UniProtKB-ARBA"/>
</dbReference>
<dbReference type="GO" id="GO:0015935">
    <property type="term" value="C:small ribosomal subunit"/>
    <property type="evidence" value="ECO:0007669"/>
    <property type="project" value="InterPro"/>
</dbReference>
<dbReference type="GO" id="GO:0019843">
    <property type="term" value="F:rRNA binding"/>
    <property type="evidence" value="ECO:0007669"/>
    <property type="project" value="UniProtKB-UniRule"/>
</dbReference>
<dbReference type="GO" id="GO:0003735">
    <property type="term" value="F:structural constituent of ribosome"/>
    <property type="evidence" value="ECO:0007669"/>
    <property type="project" value="InterPro"/>
</dbReference>
<dbReference type="GO" id="GO:0000028">
    <property type="term" value="P:ribosomal small subunit assembly"/>
    <property type="evidence" value="ECO:0007669"/>
    <property type="project" value="TreeGrafter"/>
</dbReference>
<dbReference type="GO" id="GO:0006412">
    <property type="term" value="P:translation"/>
    <property type="evidence" value="ECO:0007669"/>
    <property type="project" value="UniProtKB-UniRule"/>
</dbReference>
<dbReference type="FunFam" id="3.30.860.10:FF:000001">
    <property type="entry name" value="30S ribosomal protein S19"/>
    <property type="match status" value="1"/>
</dbReference>
<dbReference type="Gene3D" id="3.30.860.10">
    <property type="entry name" value="30s Ribosomal Protein S19, Chain A"/>
    <property type="match status" value="1"/>
</dbReference>
<dbReference type="HAMAP" id="MF_00531">
    <property type="entry name" value="Ribosomal_uS19"/>
    <property type="match status" value="1"/>
</dbReference>
<dbReference type="InterPro" id="IPR002222">
    <property type="entry name" value="Ribosomal_uS19"/>
</dbReference>
<dbReference type="InterPro" id="IPR005732">
    <property type="entry name" value="Ribosomal_uS19_bac-type"/>
</dbReference>
<dbReference type="InterPro" id="IPR020934">
    <property type="entry name" value="Ribosomal_uS19_CS"/>
</dbReference>
<dbReference type="InterPro" id="IPR023575">
    <property type="entry name" value="Ribosomal_uS19_SF"/>
</dbReference>
<dbReference type="NCBIfam" id="TIGR01050">
    <property type="entry name" value="rpsS_bact"/>
    <property type="match status" value="1"/>
</dbReference>
<dbReference type="PANTHER" id="PTHR11880">
    <property type="entry name" value="RIBOSOMAL PROTEIN S19P FAMILY MEMBER"/>
    <property type="match status" value="1"/>
</dbReference>
<dbReference type="PANTHER" id="PTHR11880:SF8">
    <property type="entry name" value="SMALL RIBOSOMAL SUBUNIT PROTEIN US19M"/>
    <property type="match status" value="1"/>
</dbReference>
<dbReference type="Pfam" id="PF00203">
    <property type="entry name" value="Ribosomal_S19"/>
    <property type="match status" value="1"/>
</dbReference>
<dbReference type="PIRSF" id="PIRSF002144">
    <property type="entry name" value="Ribosomal_S19"/>
    <property type="match status" value="1"/>
</dbReference>
<dbReference type="PRINTS" id="PR00975">
    <property type="entry name" value="RIBOSOMALS19"/>
</dbReference>
<dbReference type="SUPFAM" id="SSF54570">
    <property type="entry name" value="Ribosomal protein S19"/>
    <property type="match status" value="1"/>
</dbReference>
<dbReference type="PROSITE" id="PS00323">
    <property type="entry name" value="RIBOSOMAL_S19"/>
    <property type="match status" value="1"/>
</dbReference>
<keyword id="KW-0687">Ribonucleoprotein</keyword>
<keyword id="KW-0689">Ribosomal protein</keyword>
<keyword id="KW-0694">RNA-binding</keyword>
<keyword id="KW-0699">rRNA-binding</keyword>
<reference key="1">
    <citation type="submission" date="2008-02" db="EMBL/GenBank/DDBJ databases">
        <title>Genome sequence of Ureaplasma parvum serovar 3.</title>
        <authorList>
            <person name="Methe B.A."/>
            <person name="Glass J."/>
            <person name="Waites K."/>
            <person name="Shrivastava S."/>
        </authorList>
    </citation>
    <scope>NUCLEOTIDE SEQUENCE [LARGE SCALE GENOMIC DNA]</scope>
    <source>
        <strain>ATCC 27815 / 27 / NCTC 11736</strain>
    </source>
</reference>
<feature type="chain" id="PRO_1000081800" description="Small ribosomal subunit protein uS19">
    <location>
        <begin position="1"/>
        <end position="88"/>
    </location>
</feature>
<gene>
    <name evidence="1" type="primary">rpsS</name>
    <name type="ordered locus">UPA3_0243</name>
</gene>
<organism>
    <name type="scientific">Ureaplasma parvum serovar 3 (strain ATCC 27815 / 27 / NCTC 11736)</name>
    <dbReference type="NCBI Taxonomy" id="505682"/>
    <lineage>
        <taxon>Bacteria</taxon>
        <taxon>Bacillati</taxon>
        <taxon>Mycoplasmatota</taxon>
        <taxon>Mycoplasmoidales</taxon>
        <taxon>Mycoplasmoidaceae</taxon>
        <taxon>Ureaplasma</taxon>
    </lineage>
</organism>
<evidence type="ECO:0000255" key="1">
    <source>
        <dbReference type="HAMAP-Rule" id="MF_00531"/>
    </source>
</evidence>
<evidence type="ECO:0000305" key="2"/>
<sequence length="88" mass="9982">MSRSLKKGAYADPSLLKKVEAANASVSKKPIKTWSRRSQIFPNFVGLTFEVHNGKTFLKVYVTEDMIGHKLGEFAPTRNFKNHTEAKR</sequence>
<protein>
    <recommendedName>
        <fullName evidence="1">Small ribosomal subunit protein uS19</fullName>
    </recommendedName>
    <alternativeName>
        <fullName evidence="2">30S ribosomal protein S19</fullName>
    </alternativeName>
</protein>
<name>RS19_UREP2</name>
<comment type="function">
    <text evidence="1">Protein S19 forms a complex with S13 that binds strongly to the 16S ribosomal RNA.</text>
</comment>
<comment type="similarity">
    <text evidence="1">Belongs to the universal ribosomal protein uS19 family.</text>
</comment>
<accession>B1AIM4</accession>
<proteinExistence type="inferred from homology"/>